<name>M235_CONTE</name>
<evidence type="ECO:0000250" key="1"/>
<evidence type="ECO:0000250" key="2">
    <source>
        <dbReference type="UniProtKB" id="P0CI24"/>
    </source>
</evidence>
<evidence type="ECO:0000255" key="3"/>
<evidence type="ECO:0000305" key="4"/>
<sequence length="71" mass="7836">MMSKLGALLIICLLLFPLTAVPLDGDQHADRPAERLQDDISSKHHPMFDAVRGCCHPSTCHMRKGCSRCCS</sequence>
<accession>Q9BPJ3</accession>
<reference key="1">
    <citation type="journal article" date="2001" name="Mol. Biol. Evol.">
        <title>Mechanisms for evolving hypervariability: the case of conopeptides.</title>
        <authorList>
            <person name="Conticello S.G."/>
            <person name="Gilad Y."/>
            <person name="Avidan N."/>
            <person name="Ben-Asher E."/>
            <person name="Levy Z."/>
            <person name="Fainzilber M."/>
        </authorList>
    </citation>
    <scope>NUCLEOTIDE SEQUENCE [MRNA]</scope>
    <source>
        <tissue>Venom duct</tissue>
    </source>
</reference>
<protein>
    <recommendedName>
        <fullName>Conotoxin TxMMSK-05</fullName>
    </recommendedName>
</protein>
<feature type="signal peptide" evidence="3">
    <location>
        <begin position="1"/>
        <end position="20"/>
    </location>
</feature>
<feature type="propeptide" id="PRO_0000404904" evidence="1">
    <location>
        <begin position="21"/>
        <end position="52"/>
    </location>
</feature>
<feature type="peptide" id="PRO_0000404905" description="Conotoxin TxMMSK-05">
    <location>
        <begin position="53"/>
        <end position="71"/>
    </location>
</feature>
<feature type="disulfide bond" evidence="2">
    <location>
        <begin position="54"/>
        <end position="70"/>
    </location>
</feature>
<feature type="disulfide bond" evidence="2">
    <location>
        <begin position="55"/>
        <end position="66"/>
    </location>
</feature>
<feature type="disulfide bond" evidence="2">
    <location>
        <begin position="60"/>
        <end position="69"/>
    </location>
</feature>
<proteinExistence type="evidence at transcript level"/>
<comment type="subcellular location">
    <subcellularLocation>
        <location evidence="1">Secreted</location>
    </subcellularLocation>
</comment>
<comment type="tissue specificity">
    <text>Expressed by the venom duct.</text>
</comment>
<comment type="domain">
    <text>The cysteine framework is III (CC-C-C-CC). Classified in the M-2 branch, since 2 residues stand between the fourth and the fifth cysteine residues.</text>
</comment>
<comment type="similarity">
    <text evidence="4">Belongs to the conotoxin M superfamily.</text>
</comment>
<organism>
    <name type="scientific">Conus textile</name>
    <name type="common">Cloth-of-gold cone</name>
    <dbReference type="NCBI Taxonomy" id="6494"/>
    <lineage>
        <taxon>Eukaryota</taxon>
        <taxon>Metazoa</taxon>
        <taxon>Spiralia</taxon>
        <taxon>Lophotrochozoa</taxon>
        <taxon>Mollusca</taxon>
        <taxon>Gastropoda</taxon>
        <taxon>Caenogastropoda</taxon>
        <taxon>Neogastropoda</taxon>
        <taxon>Conoidea</taxon>
        <taxon>Conidae</taxon>
        <taxon>Conus</taxon>
        <taxon>Cylinder</taxon>
    </lineage>
</organism>
<keyword id="KW-1015">Disulfide bond</keyword>
<keyword id="KW-0528">Neurotoxin</keyword>
<keyword id="KW-0964">Secreted</keyword>
<keyword id="KW-0732">Signal</keyword>
<keyword id="KW-0800">Toxin</keyword>
<dbReference type="EMBL" id="AF214930">
    <property type="protein sequence ID" value="AAG60358.1"/>
    <property type="molecule type" value="mRNA"/>
</dbReference>
<dbReference type="ConoServer" id="617">
    <property type="toxin name" value="TxMMSK-05 precursor"/>
</dbReference>
<dbReference type="GO" id="GO:0005576">
    <property type="term" value="C:extracellular region"/>
    <property type="evidence" value="ECO:0007669"/>
    <property type="project" value="UniProtKB-SubCell"/>
</dbReference>
<dbReference type="GO" id="GO:0008200">
    <property type="term" value="F:ion channel inhibitor activity"/>
    <property type="evidence" value="ECO:0007669"/>
    <property type="project" value="InterPro"/>
</dbReference>
<dbReference type="GO" id="GO:0090729">
    <property type="term" value="F:toxin activity"/>
    <property type="evidence" value="ECO:0007669"/>
    <property type="project" value="UniProtKB-KW"/>
</dbReference>
<dbReference type="InterPro" id="IPR004214">
    <property type="entry name" value="Conotoxin"/>
</dbReference>
<dbReference type="Pfam" id="PF02950">
    <property type="entry name" value="Conotoxin"/>
    <property type="match status" value="1"/>
</dbReference>